<protein>
    <recommendedName>
        <fullName evidence="1">Ribonuclease HII</fullName>
        <shortName evidence="1">RNase HII</shortName>
        <ecNumber evidence="1">3.1.26.4</ecNumber>
    </recommendedName>
</protein>
<feature type="chain" id="PRO_1000031178" description="Ribonuclease HII">
    <location>
        <begin position="1"/>
        <end position="205"/>
    </location>
</feature>
<feature type="domain" description="RNase H type-2" evidence="2">
    <location>
        <begin position="16"/>
        <end position="205"/>
    </location>
</feature>
<feature type="binding site" evidence="1">
    <location>
        <position position="22"/>
    </location>
    <ligand>
        <name>a divalent metal cation</name>
        <dbReference type="ChEBI" id="CHEBI:60240"/>
    </ligand>
</feature>
<feature type="binding site" evidence="1">
    <location>
        <position position="23"/>
    </location>
    <ligand>
        <name>a divalent metal cation</name>
        <dbReference type="ChEBI" id="CHEBI:60240"/>
    </ligand>
</feature>
<feature type="binding site" evidence="1">
    <location>
        <position position="118"/>
    </location>
    <ligand>
        <name>a divalent metal cation</name>
        <dbReference type="ChEBI" id="CHEBI:60240"/>
    </ligand>
</feature>
<comment type="function">
    <text evidence="1">Endonuclease that specifically degrades the RNA of RNA-DNA hybrids.</text>
</comment>
<comment type="catalytic activity">
    <reaction evidence="1">
        <text>Endonucleolytic cleavage to 5'-phosphomonoester.</text>
        <dbReference type="EC" id="3.1.26.4"/>
    </reaction>
</comment>
<comment type="cofactor">
    <cofactor evidence="1">
        <name>Mn(2+)</name>
        <dbReference type="ChEBI" id="CHEBI:29035"/>
    </cofactor>
    <cofactor evidence="1">
        <name>Mg(2+)</name>
        <dbReference type="ChEBI" id="CHEBI:18420"/>
    </cofactor>
    <text evidence="1">Manganese or magnesium. Binds 1 divalent metal ion per monomer in the absence of substrate. May bind a second metal ion after substrate binding.</text>
</comment>
<comment type="subcellular location">
    <subcellularLocation>
        <location evidence="1">Cytoplasm</location>
    </subcellularLocation>
</comment>
<comment type="similarity">
    <text evidence="1">Belongs to the RNase HII family.</text>
</comment>
<reference key="1">
    <citation type="journal article" date="2007" name="PLoS Genet.">
        <title>Patterns and implications of gene gain and loss in the evolution of Prochlorococcus.</title>
        <authorList>
            <person name="Kettler G.C."/>
            <person name="Martiny A.C."/>
            <person name="Huang K."/>
            <person name="Zucker J."/>
            <person name="Coleman M.L."/>
            <person name="Rodrigue S."/>
            <person name="Chen F."/>
            <person name="Lapidus A."/>
            <person name="Ferriera S."/>
            <person name="Johnson J."/>
            <person name="Steglich C."/>
            <person name="Church G.M."/>
            <person name="Richardson P."/>
            <person name="Chisholm S.W."/>
        </authorList>
    </citation>
    <scope>NUCLEOTIDE SEQUENCE [LARGE SCALE GENOMIC DNA]</scope>
    <source>
        <strain>AS9601</strain>
    </source>
</reference>
<dbReference type="EC" id="3.1.26.4" evidence="1"/>
<dbReference type="EMBL" id="CP000551">
    <property type="protein sequence ID" value="ABM70988.1"/>
    <property type="molecule type" value="Genomic_DNA"/>
</dbReference>
<dbReference type="RefSeq" id="WP_011819116.1">
    <property type="nucleotide sequence ID" value="NC_008816.1"/>
</dbReference>
<dbReference type="SMR" id="A2BT77"/>
<dbReference type="STRING" id="146891.A9601_17051"/>
<dbReference type="KEGG" id="pmb:A9601_17051"/>
<dbReference type="eggNOG" id="COG0164">
    <property type="taxonomic scope" value="Bacteria"/>
</dbReference>
<dbReference type="HOGENOM" id="CLU_036532_3_1_3"/>
<dbReference type="OrthoDB" id="9803420at2"/>
<dbReference type="Proteomes" id="UP000002590">
    <property type="component" value="Chromosome"/>
</dbReference>
<dbReference type="GO" id="GO:0005737">
    <property type="term" value="C:cytoplasm"/>
    <property type="evidence" value="ECO:0007669"/>
    <property type="project" value="UniProtKB-SubCell"/>
</dbReference>
<dbReference type="GO" id="GO:0032299">
    <property type="term" value="C:ribonuclease H2 complex"/>
    <property type="evidence" value="ECO:0007669"/>
    <property type="project" value="TreeGrafter"/>
</dbReference>
<dbReference type="GO" id="GO:0030145">
    <property type="term" value="F:manganese ion binding"/>
    <property type="evidence" value="ECO:0007669"/>
    <property type="project" value="UniProtKB-UniRule"/>
</dbReference>
<dbReference type="GO" id="GO:0003723">
    <property type="term" value="F:RNA binding"/>
    <property type="evidence" value="ECO:0007669"/>
    <property type="project" value="InterPro"/>
</dbReference>
<dbReference type="GO" id="GO:0004523">
    <property type="term" value="F:RNA-DNA hybrid ribonuclease activity"/>
    <property type="evidence" value="ECO:0007669"/>
    <property type="project" value="UniProtKB-UniRule"/>
</dbReference>
<dbReference type="GO" id="GO:0043137">
    <property type="term" value="P:DNA replication, removal of RNA primer"/>
    <property type="evidence" value="ECO:0007669"/>
    <property type="project" value="TreeGrafter"/>
</dbReference>
<dbReference type="GO" id="GO:0006298">
    <property type="term" value="P:mismatch repair"/>
    <property type="evidence" value="ECO:0007669"/>
    <property type="project" value="TreeGrafter"/>
</dbReference>
<dbReference type="CDD" id="cd07182">
    <property type="entry name" value="RNase_HII_bacteria_HII_like"/>
    <property type="match status" value="1"/>
</dbReference>
<dbReference type="Gene3D" id="3.30.420.10">
    <property type="entry name" value="Ribonuclease H-like superfamily/Ribonuclease H"/>
    <property type="match status" value="1"/>
</dbReference>
<dbReference type="HAMAP" id="MF_00052_B">
    <property type="entry name" value="RNase_HII_B"/>
    <property type="match status" value="1"/>
</dbReference>
<dbReference type="InterPro" id="IPR022898">
    <property type="entry name" value="RNase_HII"/>
</dbReference>
<dbReference type="InterPro" id="IPR001352">
    <property type="entry name" value="RNase_HII/HIII"/>
</dbReference>
<dbReference type="InterPro" id="IPR024567">
    <property type="entry name" value="RNase_HII/HIII_dom"/>
</dbReference>
<dbReference type="InterPro" id="IPR012337">
    <property type="entry name" value="RNaseH-like_sf"/>
</dbReference>
<dbReference type="InterPro" id="IPR036397">
    <property type="entry name" value="RNaseH_sf"/>
</dbReference>
<dbReference type="NCBIfam" id="NF000595">
    <property type="entry name" value="PRK00015.1-3"/>
    <property type="match status" value="1"/>
</dbReference>
<dbReference type="NCBIfam" id="NF010537">
    <property type="entry name" value="PRK13925.1"/>
    <property type="match status" value="1"/>
</dbReference>
<dbReference type="PANTHER" id="PTHR10954">
    <property type="entry name" value="RIBONUCLEASE H2 SUBUNIT A"/>
    <property type="match status" value="1"/>
</dbReference>
<dbReference type="PANTHER" id="PTHR10954:SF18">
    <property type="entry name" value="RIBONUCLEASE HII"/>
    <property type="match status" value="1"/>
</dbReference>
<dbReference type="Pfam" id="PF01351">
    <property type="entry name" value="RNase_HII"/>
    <property type="match status" value="1"/>
</dbReference>
<dbReference type="SUPFAM" id="SSF53098">
    <property type="entry name" value="Ribonuclease H-like"/>
    <property type="match status" value="1"/>
</dbReference>
<dbReference type="PROSITE" id="PS51975">
    <property type="entry name" value="RNASE_H_2"/>
    <property type="match status" value="1"/>
</dbReference>
<sequence>MQEKKEEDLQQALNKVSEVGIDEVGKGAIFGPVFAAAVVLTEKNKFILKQFGVTDSKKLTPKKRKLLLPKILLLSSDYGIGQSSAREIDKLGIRVATELSMIRALRKLKEKPSELIIDGPLLLRPWNGIQKNIVSGDSKFISIASASIVAKVSRDNLMERLEKNYSGYLIFKNKGYGTREHLSLIKKNGITELHRKSFLKKSKLI</sequence>
<organism>
    <name type="scientific">Prochlorococcus marinus (strain AS9601)</name>
    <dbReference type="NCBI Taxonomy" id="146891"/>
    <lineage>
        <taxon>Bacteria</taxon>
        <taxon>Bacillati</taxon>
        <taxon>Cyanobacteriota</taxon>
        <taxon>Cyanophyceae</taxon>
        <taxon>Synechococcales</taxon>
        <taxon>Prochlorococcaceae</taxon>
        <taxon>Prochlorococcus</taxon>
    </lineage>
</organism>
<accession>A2BT77</accession>
<name>RNH2_PROMS</name>
<keyword id="KW-0963">Cytoplasm</keyword>
<keyword id="KW-0255">Endonuclease</keyword>
<keyword id="KW-0378">Hydrolase</keyword>
<keyword id="KW-0464">Manganese</keyword>
<keyword id="KW-0479">Metal-binding</keyword>
<keyword id="KW-0540">Nuclease</keyword>
<proteinExistence type="inferred from homology"/>
<gene>
    <name evidence="1" type="primary">rnhB</name>
    <name type="ordered locus">A9601_17051</name>
</gene>
<evidence type="ECO:0000255" key="1">
    <source>
        <dbReference type="HAMAP-Rule" id="MF_00052"/>
    </source>
</evidence>
<evidence type="ECO:0000255" key="2">
    <source>
        <dbReference type="PROSITE-ProRule" id="PRU01319"/>
    </source>
</evidence>